<gene>
    <name type="primary">rrp36</name>
    <name type="ORF">An15g00730</name>
</gene>
<accession>A2R4K5</accession>
<evidence type="ECO:0000250" key="1"/>
<evidence type="ECO:0000255" key="2"/>
<evidence type="ECO:0000256" key="3">
    <source>
        <dbReference type="SAM" id="MobiDB-lite"/>
    </source>
</evidence>
<evidence type="ECO:0000305" key="4"/>
<proteinExistence type="inferred from homology"/>
<reference key="1">
    <citation type="journal article" date="2007" name="Nat. Biotechnol.">
        <title>Genome sequencing and analysis of the versatile cell factory Aspergillus niger CBS 513.88.</title>
        <authorList>
            <person name="Pel H.J."/>
            <person name="de Winde J.H."/>
            <person name="Archer D.B."/>
            <person name="Dyer P.S."/>
            <person name="Hofmann G."/>
            <person name="Schaap P.J."/>
            <person name="Turner G."/>
            <person name="de Vries R.P."/>
            <person name="Albang R."/>
            <person name="Albermann K."/>
            <person name="Andersen M.R."/>
            <person name="Bendtsen J.D."/>
            <person name="Benen J.A.E."/>
            <person name="van den Berg M."/>
            <person name="Breestraat S."/>
            <person name="Caddick M.X."/>
            <person name="Contreras R."/>
            <person name="Cornell M."/>
            <person name="Coutinho P.M."/>
            <person name="Danchin E.G.J."/>
            <person name="Debets A.J.M."/>
            <person name="Dekker P."/>
            <person name="van Dijck P.W.M."/>
            <person name="van Dijk A."/>
            <person name="Dijkhuizen L."/>
            <person name="Driessen A.J.M."/>
            <person name="d'Enfert C."/>
            <person name="Geysens S."/>
            <person name="Goosen C."/>
            <person name="Groot G.S.P."/>
            <person name="de Groot P.W.J."/>
            <person name="Guillemette T."/>
            <person name="Henrissat B."/>
            <person name="Herweijer M."/>
            <person name="van den Hombergh J.P.T.W."/>
            <person name="van den Hondel C.A.M.J.J."/>
            <person name="van der Heijden R.T.J.M."/>
            <person name="van der Kaaij R.M."/>
            <person name="Klis F.M."/>
            <person name="Kools H.J."/>
            <person name="Kubicek C.P."/>
            <person name="van Kuyk P.A."/>
            <person name="Lauber J."/>
            <person name="Lu X."/>
            <person name="van der Maarel M.J.E.C."/>
            <person name="Meulenberg R."/>
            <person name="Menke H."/>
            <person name="Mortimer M.A."/>
            <person name="Nielsen J."/>
            <person name="Oliver S.G."/>
            <person name="Olsthoorn M."/>
            <person name="Pal K."/>
            <person name="van Peij N.N.M.E."/>
            <person name="Ram A.F.J."/>
            <person name="Rinas U."/>
            <person name="Roubos J.A."/>
            <person name="Sagt C.M.J."/>
            <person name="Schmoll M."/>
            <person name="Sun J."/>
            <person name="Ussery D."/>
            <person name="Varga J."/>
            <person name="Vervecken W."/>
            <person name="van de Vondervoort P.J.J."/>
            <person name="Wedler H."/>
            <person name="Woesten H.A.B."/>
            <person name="Zeng A.-P."/>
            <person name="van Ooyen A.J.J."/>
            <person name="Visser J."/>
            <person name="Stam H."/>
        </authorList>
    </citation>
    <scope>NUCLEOTIDE SEQUENCE [LARGE SCALE GENOMIC DNA]</scope>
    <source>
        <strain>ATCC MYA-4892 / CBS 513.88 / FGSC A1513</strain>
    </source>
</reference>
<comment type="function">
    <text evidence="1">Component of the 90S pre-ribosome involved in the maturation of rRNAs. Required for early cleavages of the pre-RNAs in the 40S ribosomal subunit maturation pathway (By similarity).</text>
</comment>
<comment type="subunit">
    <text evidence="1">Associates with 90S and pre-40S pre-ribosomal particles.</text>
</comment>
<comment type="subcellular location">
    <subcellularLocation>
        <location evidence="1">Nucleus</location>
        <location evidence="1">Nucleolus</location>
    </subcellularLocation>
</comment>
<comment type="similarity">
    <text evidence="4">Belongs to the RRP36 family.</text>
</comment>
<organism>
    <name type="scientific">Aspergillus niger (strain ATCC MYA-4892 / CBS 513.88 / FGSC A1513)</name>
    <dbReference type="NCBI Taxonomy" id="425011"/>
    <lineage>
        <taxon>Eukaryota</taxon>
        <taxon>Fungi</taxon>
        <taxon>Dikarya</taxon>
        <taxon>Ascomycota</taxon>
        <taxon>Pezizomycotina</taxon>
        <taxon>Eurotiomycetes</taxon>
        <taxon>Eurotiomycetidae</taxon>
        <taxon>Eurotiales</taxon>
        <taxon>Aspergillaceae</taxon>
        <taxon>Aspergillus</taxon>
        <taxon>Aspergillus subgen. Circumdati</taxon>
    </lineage>
</organism>
<sequence length="379" mass="42502">MAISDLLNRRVRAVAQDDEELYSDQSGSDQASDDLRSDESGSESGSDGSLDEDDDDDVSQGDPEDMDDDDDDDDDDDEDDEDDNDDAQDDVQASLSSISFGALAKAQASIGPKSKRSSKASRTEDEPAAPSPLDDIRARIQEAREQKRQALAKNKDSEKLSRSSKHAPAVQSSKHAVSRKRTIIEPPSVPKSRDPRFDPTVLSQGGRGNPQGTSNAYAFLDEYRRDELKQLKEQYAKTKNQEQKEALKRTIRSTQDRLRAMENRKREKEILAEHKKKEKQLIREGKKSNPYFLKKSDLKKQVLLKKYENMNSKDRTKALERKRKKTAAKERKEMPMERRALAGDDAPSGGGRWRLETPQSCIDVGTCCLISAPGSCYCI</sequence>
<feature type="chain" id="PRO_0000397618" description="rRNA biogenesis protein rrp36">
    <location>
        <begin position="1"/>
        <end position="379"/>
    </location>
</feature>
<feature type="region of interest" description="Disordered" evidence="3">
    <location>
        <begin position="14"/>
        <end position="219"/>
    </location>
</feature>
<feature type="region of interest" description="Disordered" evidence="3">
    <location>
        <begin position="313"/>
        <end position="350"/>
    </location>
</feature>
<feature type="coiled-coil region" evidence="2">
    <location>
        <begin position="133"/>
        <end position="162"/>
    </location>
</feature>
<feature type="coiled-coil region" evidence="2">
    <location>
        <begin position="224"/>
        <end position="284"/>
    </location>
</feature>
<feature type="compositionally biased region" description="Acidic residues" evidence="3">
    <location>
        <begin position="49"/>
        <end position="89"/>
    </location>
</feature>
<feature type="compositionally biased region" description="Basic and acidic residues" evidence="3">
    <location>
        <begin position="134"/>
        <end position="161"/>
    </location>
</feature>
<feature type="compositionally biased region" description="Basic and acidic residues" evidence="3">
    <location>
        <begin position="327"/>
        <end position="342"/>
    </location>
</feature>
<keyword id="KW-0175">Coiled coil</keyword>
<keyword id="KW-0539">Nucleus</keyword>
<keyword id="KW-1185">Reference proteome</keyword>
<keyword id="KW-0687">Ribonucleoprotein</keyword>
<keyword id="KW-0690">Ribosome biogenesis</keyword>
<keyword id="KW-0698">rRNA processing</keyword>
<dbReference type="EMBL" id="AM270332">
    <property type="protein sequence ID" value="CAK42243.1"/>
    <property type="molecule type" value="Genomic_DNA"/>
</dbReference>
<dbReference type="SMR" id="A2R4K5"/>
<dbReference type="EnsemblFungi" id="CAK42243">
    <property type="protein sequence ID" value="CAK42243"/>
    <property type="gene ID" value="An15g00730"/>
</dbReference>
<dbReference type="VEuPathDB" id="FungiDB:An15g00730"/>
<dbReference type="HOGENOM" id="CLU_048802_0_0_1"/>
<dbReference type="Proteomes" id="UP000006706">
    <property type="component" value="Chromosome 3R"/>
</dbReference>
<dbReference type="GO" id="GO:0030686">
    <property type="term" value="C:90S preribosome"/>
    <property type="evidence" value="ECO:0007669"/>
    <property type="project" value="TreeGrafter"/>
</dbReference>
<dbReference type="GO" id="GO:0005730">
    <property type="term" value="C:nucleolus"/>
    <property type="evidence" value="ECO:0007669"/>
    <property type="project" value="UniProtKB-SubCell"/>
</dbReference>
<dbReference type="GO" id="GO:0000462">
    <property type="term" value="P:maturation of SSU-rRNA from tricistronic rRNA transcript (SSU-rRNA, 5.8S rRNA, LSU-rRNA)"/>
    <property type="evidence" value="ECO:0007669"/>
    <property type="project" value="TreeGrafter"/>
</dbReference>
<dbReference type="InterPro" id="IPR009292">
    <property type="entry name" value="RRP36"/>
</dbReference>
<dbReference type="PANTHER" id="PTHR21738">
    <property type="entry name" value="RIBOSOMAL RNA PROCESSING PROTEIN 36 HOMOLOG"/>
    <property type="match status" value="1"/>
</dbReference>
<dbReference type="PANTHER" id="PTHR21738:SF0">
    <property type="entry name" value="RIBOSOMAL RNA PROCESSING PROTEIN 36 HOMOLOG"/>
    <property type="match status" value="1"/>
</dbReference>
<dbReference type="Pfam" id="PF06102">
    <property type="entry name" value="RRP36"/>
    <property type="match status" value="1"/>
</dbReference>
<name>RRP36_ASPNC</name>
<protein>
    <recommendedName>
        <fullName>rRNA biogenesis protein rrp36</fullName>
    </recommendedName>
    <alternativeName>
        <fullName>Ribosomal RNA-processing protein 36</fullName>
    </alternativeName>
</protein>